<name>SC231_SCHPO</name>
<dbReference type="EMBL" id="CU329672">
    <property type="protein sequence ID" value="CAA21224.1"/>
    <property type="molecule type" value="Genomic_DNA"/>
</dbReference>
<dbReference type="PIR" id="T41295">
    <property type="entry name" value="T41295"/>
</dbReference>
<dbReference type="PIR" id="T41452">
    <property type="entry name" value="T41452"/>
</dbReference>
<dbReference type="RefSeq" id="NP_587900.1">
    <property type="nucleotide sequence ID" value="NM_001022892.2"/>
</dbReference>
<dbReference type="SMR" id="O74873"/>
<dbReference type="BioGRID" id="275284">
    <property type="interactions" value="3"/>
</dbReference>
<dbReference type="FunCoup" id="O74873">
    <property type="interactions" value="456"/>
</dbReference>
<dbReference type="STRING" id="284812.O74873"/>
<dbReference type="iPTMnet" id="O74873"/>
<dbReference type="PaxDb" id="4896-SPCC31H12.07.1"/>
<dbReference type="EnsemblFungi" id="SPCC31H12.07.1">
    <property type="protein sequence ID" value="SPCC31H12.07.1:pep"/>
    <property type="gene ID" value="SPCC31H12.07"/>
</dbReference>
<dbReference type="GeneID" id="2538699"/>
<dbReference type="KEGG" id="spo:2538699"/>
<dbReference type="PomBase" id="SPCC31H12.07">
    <property type="gene designation" value="sec231"/>
</dbReference>
<dbReference type="VEuPathDB" id="FungiDB:SPCC31H12.07"/>
<dbReference type="eggNOG" id="KOG1986">
    <property type="taxonomic scope" value="Eukaryota"/>
</dbReference>
<dbReference type="HOGENOM" id="CLU_008658_3_0_1"/>
<dbReference type="InParanoid" id="O74873"/>
<dbReference type="OMA" id="FPPHYAE"/>
<dbReference type="PhylomeDB" id="O74873"/>
<dbReference type="PRO" id="PR:O74873"/>
<dbReference type="Proteomes" id="UP000002485">
    <property type="component" value="Chromosome III"/>
</dbReference>
<dbReference type="GO" id="GO:0030127">
    <property type="term" value="C:COPII vesicle coat"/>
    <property type="evidence" value="ECO:0000318"/>
    <property type="project" value="GO_Central"/>
</dbReference>
<dbReference type="GO" id="GO:0070971">
    <property type="term" value="C:endoplasmic reticulum exit site"/>
    <property type="evidence" value="ECO:0000318"/>
    <property type="project" value="GO_Central"/>
</dbReference>
<dbReference type="GO" id="GO:0005789">
    <property type="term" value="C:endoplasmic reticulum membrane"/>
    <property type="evidence" value="ECO:0007669"/>
    <property type="project" value="UniProtKB-SubCell"/>
</dbReference>
<dbReference type="GO" id="GO:0000139">
    <property type="term" value="C:Golgi membrane"/>
    <property type="evidence" value="ECO:0007669"/>
    <property type="project" value="UniProtKB-SubCell"/>
</dbReference>
<dbReference type="GO" id="GO:0005096">
    <property type="term" value="F:GTPase activator activity"/>
    <property type="evidence" value="ECO:0000318"/>
    <property type="project" value="GO_Central"/>
</dbReference>
<dbReference type="GO" id="GO:0008270">
    <property type="term" value="F:zinc ion binding"/>
    <property type="evidence" value="ECO:0000255"/>
    <property type="project" value="PomBase"/>
</dbReference>
<dbReference type="GO" id="GO:0090110">
    <property type="term" value="P:COPII-coated vesicle cargo loading"/>
    <property type="evidence" value="ECO:0000318"/>
    <property type="project" value="GO_Central"/>
</dbReference>
<dbReference type="GO" id="GO:0036503">
    <property type="term" value="P:ERAD pathway"/>
    <property type="evidence" value="ECO:0000266"/>
    <property type="project" value="PomBase"/>
</dbReference>
<dbReference type="GO" id="GO:0006886">
    <property type="term" value="P:intracellular protein transport"/>
    <property type="evidence" value="ECO:0000305"/>
    <property type="project" value="PomBase"/>
</dbReference>
<dbReference type="GO" id="GO:0061709">
    <property type="term" value="P:reticulophagy"/>
    <property type="evidence" value="ECO:0000266"/>
    <property type="project" value="PomBase"/>
</dbReference>
<dbReference type="CDD" id="cd01478">
    <property type="entry name" value="Sec23-like"/>
    <property type="match status" value="1"/>
</dbReference>
<dbReference type="CDD" id="cd11287">
    <property type="entry name" value="Sec23_C"/>
    <property type="match status" value="1"/>
</dbReference>
<dbReference type="FunFam" id="1.20.120.730:FF:000001">
    <property type="entry name" value="Protein transport protein SEC23"/>
    <property type="match status" value="1"/>
</dbReference>
<dbReference type="FunFam" id="2.30.30.380:FF:000001">
    <property type="entry name" value="Protein transport protein SEC23"/>
    <property type="match status" value="1"/>
</dbReference>
<dbReference type="FunFam" id="3.40.20.10:FF:000006">
    <property type="entry name" value="Protein transport protein SEC23"/>
    <property type="match status" value="1"/>
</dbReference>
<dbReference type="FunFam" id="3.40.50.410:FF:000008">
    <property type="entry name" value="Protein transport protein SEC23"/>
    <property type="match status" value="1"/>
</dbReference>
<dbReference type="Gene3D" id="2.60.40.1670">
    <property type="entry name" value="beta-sandwich domain of Sec23/24"/>
    <property type="match status" value="1"/>
</dbReference>
<dbReference type="Gene3D" id="1.20.120.730">
    <property type="entry name" value="Sec23/Sec24 helical domain"/>
    <property type="match status" value="1"/>
</dbReference>
<dbReference type="Gene3D" id="3.40.20.10">
    <property type="entry name" value="Severin"/>
    <property type="match status" value="1"/>
</dbReference>
<dbReference type="Gene3D" id="3.40.50.410">
    <property type="entry name" value="von Willebrand factor, type A domain"/>
    <property type="match status" value="1"/>
</dbReference>
<dbReference type="Gene3D" id="2.30.30.380">
    <property type="entry name" value="Zn-finger domain of Sec23/24"/>
    <property type="match status" value="1"/>
</dbReference>
<dbReference type="InterPro" id="IPR029006">
    <property type="entry name" value="ADF-H/Gelsolin-like_dom_sf"/>
</dbReference>
<dbReference type="InterPro" id="IPR007123">
    <property type="entry name" value="Gelsolin-like_dom"/>
</dbReference>
<dbReference type="InterPro" id="IPR036180">
    <property type="entry name" value="Gelsolin-like_dom_sf"/>
</dbReference>
<dbReference type="InterPro" id="IPR037364">
    <property type="entry name" value="Sec23"/>
</dbReference>
<dbReference type="InterPro" id="IPR006900">
    <property type="entry name" value="Sec23/24_helical_dom"/>
</dbReference>
<dbReference type="InterPro" id="IPR036175">
    <property type="entry name" value="Sec23/24_helical_dom_sf"/>
</dbReference>
<dbReference type="InterPro" id="IPR006896">
    <property type="entry name" value="Sec23/24_trunk_dom"/>
</dbReference>
<dbReference type="InterPro" id="IPR012990">
    <property type="entry name" value="Sec23_24_beta_S"/>
</dbReference>
<dbReference type="InterPro" id="IPR037550">
    <property type="entry name" value="Sec23_C"/>
</dbReference>
<dbReference type="InterPro" id="IPR036465">
    <property type="entry name" value="vWFA_dom_sf"/>
</dbReference>
<dbReference type="InterPro" id="IPR006895">
    <property type="entry name" value="Znf_Sec23_Sec24"/>
</dbReference>
<dbReference type="InterPro" id="IPR036174">
    <property type="entry name" value="Znf_Sec23_Sec24_sf"/>
</dbReference>
<dbReference type="PANTHER" id="PTHR11141">
    <property type="entry name" value="PROTEIN TRANSPORT PROTEIN SEC23"/>
    <property type="match status" value="1"/>
</dbReference>
<dbReference type="PANTHER" id="PTHR11141:SF31">
    <property type="entry name" value="PROTEIN TRANSPORT PROTEIN SEC23-1"/>
    <property type="match status" value="1"/>
</dbReference>
<dbReference type="Pfam" id="PF00626">
    <property type="entry name" value="Gelsolin"/>
    <property type="match status" value="1"/>
</dbReference>
<dbReference type="Pfam" id="PF08033">
    <property type="entry name" value="Sec23_BS"/>
    <property type="match status" value="1"/>
</dbReference>
<dbReference type="Pfam" id="PF04815">
    <property type="entry name" value="Sec23_helical"/>
    <property type="match status" value="1"/>
</dbReference>
<dbReference type="Pfam" id="PF04811">
    <property type="entry name" value="Sec23_trunk"/>
    <property type="match status" value="1"/>
</dbReference>
<dbReference type="Pfam" id="PF04810">
    <property type="entry name" value="zf-Sec23_Sec24"/>
    <property type="match status" value="1"/>
</dbReference>
<dbReference type="SUPFAM" id="SSF81995">
    <property type="entry name" value="beta-sandwich domain of Sec23/24"/>
    <property type="match status" value="1"/>
</dbReference>
<dbReference type="SUPFAM" id="SSF82754">
    <property type="entry name" value="C-terminal, gelsolin-like domain of Sec23/24"/>
    <property type="match status" value="1"/>
</dbReference>
<dbReference type="SUPFAM" id="SSF81811">
    <property type="entry name" value="Helical domain of Sec23/24"/>
    <property type="match status" value="1"/>
</dbReference>
<dbReference type="SUPFAM" id="SSF53300">
    <property type="entry name" value="vWA-like"/>
    <property type="match status" value="1"/>
</dbReference>
<dbReference type="SUPFAM" id="SSF82919">
    <property type="entry name" value="Zn-finger domain of Sec23/24"/>
    <property type="match status" value="1"/>
</dbReference>
<protein>
    <recommendedName>
        <fullName>Protein transport protein sec23-1</fullName>
    </recommendedName>
</protein>
<organism>
    <name type="scientific">Schizosaccharomyces pombe (strain 972 / ATCC 24843)</name>
    <name type="common">Fission yeast</name>
    <dbReference type="NCBI Taxonomy" id="284812"/>
    <lineage>
        <taxon>Eukaryota</taxon>
        <taxon>Fungi</taxon>
        <taxon>Dikarya</taxon>
        <taxon>Ascomycota</taxon>
        <taxon>Taphrinomycotina</taxon>
        <taxon>Schizosaccharomycetes</taxon>
        <taxon>Schizosaccharomycetales</taxon>
        <taxon>Schizosaccharomycetaceae</taxon>
        <taxon>Schizosaccharomyces</taxon>
    </lineage>
</organism>
<evidence type="ECO:0000250" key="1"/>
<evidence type="ECO:0000305" key="2"/>
<gene>
    <name type="primary">sec231</name>
    <name type="synonym">sec23a</name>
    <name type="ORF">SPCC31H12.07</name>
    <name type="ORF">SPCC5E4.01</name>
</gene>
<reference key="1">
    <citation type="journal article" date="2002" name="Nature">
        <title>The genome sequence of Schizosaccharomyces pombe.</title>
        <authorList>
            <person name="Wood V."/>
            <person name="Gwilliam R."/>
            <person name="Rajandream M.A."/>
            <person name="Lyne M.H."/>
            <person name="Lyne R."/>
            <person name="Stewart A."/>
            <person name="Sgouros J.G."/>
            <person name="Peat N."/>
            <person name="Hayles J."/>
            <person name="Baker S.G."/>
            <person name="Basham D."/>
            <person name="Bowman S."/>
            <person name="Brooks K."/>
            <person name="Brown D."/>
            <person name="Brown S."/>
            <person name="Chillingworth T."/>
            <person name="Churcher C.M."/>
            <person name="Collins M."/>
            <person name="Connor R."/>
            <person name="Cronin A."/>
            <person name="Davis P."/>
            <person name="Feltwell T."/>
            <person name="Fraser A."/>
            <person name="Gentles S."/>
            <person name="Goble A."/>
            <person name="Hamlin N."/>
            <person name="Harris D.E."/>
            <person name="Hidalgo J."/>
            <person name="Hodgson G."/>
            <person name="Holroyd S."/>
            <person name="Hornsby T."/>
            <person name="Howarth S."/>
            <person name="Huckle E.J."/>
            <person name="Hunt S."/>
            <person name="Jagels K."/>
            <person name="James K.D."/>
            <person name="Jones L."/>
            <person name="Jones M."/>
            <person name="Leather S."/>
            <person name="McDonald S."/>
            <person name="McLean J."/>
            <person name="Mooney P."/>
            <person name="Moule S."/>
            <person name="Mungall K.L."/>
            <person name="Murphy L.D."/>
            <person name="Niblett D."/>
            <person name="Odell C."/>
            <person name="Oliver K."/>
            <person name="O'Neil S."/>
            <person name="Pearson D."/>
            <person name="Quail M.A."/>
            <person name="Rabbinowitsch E."/>
            <person name="Rutherford K.M."/>
            <person name="Rutter S."/>
            <person name="Saunders D."/>
            <person name="Seeger K."/>
            <person name="Sharp S."/>
            <person name="Skelton J."/>
            <person name="Simmonds M.N."/>
            <person name="Squares R."/>
            <person name="Squares S."/>
            <person name="Stevens K."/>
            <person name="Taylor K."/>
            <person name="Taylor R.G."/>
            <person name="Tivey A."/>
            <person name="Walsh S.V."/>
            <person name="Warren T."/>
            <person name="Whitehead S."/>
            <person name="Woodward J.R."/>
            <person name="Volckaert G."/>
            <person name="Aert R."/>
            <person name="Robben J."/>
            <person name="Grymonprez B."/>
            <person name="Weltjens I."/>
            <person name="Vanstreels E."/>
            <person name="Rieger M."/>
            <person name="Schaefer M."/>
            <person name="Mueller-Auer S."/>
            <person name="Gabel C."/>
            <person name="Fuchs M."/>
            <person name="Duesterhoeft A."/>
            <person name="Fritzc C."/>
            <person name="Holzer E."/>
            <person name="Moestl D."/>
            <person name="Hilbert H."/>
            <person name="Borzym K."/>
            <person name="Langer I."/>
            <person name="Beck A."/>
            <person name="Lehrach H."/>
            <person name="Reinhardt R."/>
            <person name="Pohl T.M."/>
            <person name="Eger P."/>
            <person name="Zimmermann W."/>
            <person name="Wedler H."/>
            <person name="Wambutt R."/>
            <person name="Purnelle B."/>
            <person name="Goffeau A."/>
            <person name="Cadieu E."/>
            <person name="Dreano S."/>
            <person name="Gloux S."/>
            <person name="Lelaure V."/>
            <person name="Mottier S."/>
            <person name="Galibert F."/>
            <person name="Aves S.J."/>
            <person name="Xiang Z."/>
            <person name="Hunt C."/>
            <person name="Moore K."/>
            <person name="Hurst S.M."/>
            <person name="Lucas M."/>
            <person name="Rochet M."/>
            <person name="Gaillardin C."/>
            <person name="Tallada V.A."/>
            <person name="Garzon A."/>
            <person name="Thode G."/>
            <person name="Daga R.R."/>
            <person name="Cruzado L."/>
            <person name="Jimenez J."/>
            <person name="Sanchez M."/>
            <person name="del Rey F."/>
            <person name="Benito J."/>
            <person name="Dominguez A."/>
            <person name="Revuelta J.L."/>
            <person name="Moreno S."/>
            <person name="Armstrong J."/>
            <person name="Forsburg S.L."/>
            <person name="Cerutti L."/>
            <person name="Lowe T."/>
            <person name="McCombie W.R."/>
            <person name="Paulsen I."/>
            <person name="Potashkin J."/>
            <person name="Shpakovski G.V."/>
            <person name="Ussery D."/>
            <person name="Barrell B.G."/>
            <person name="Nurse P."/>
        </authorList>
    </citation>
    <scope>NUCLEOTIDE SEQUENCE [LARGE SCALE GENOMIC DNA]</scope>
    <source>
        <strain>972 / ATCC 24843</strain>
    </source>
</reference>
<sequence length="759" mass="84845">MNFEEIEERDGVRFTWNVFPSTRIESSRTIVPIASIYKPLNERPDLPPVLYEPVTCKAPCKAVLNPYCHIDTRAKFWICPFCLQRNMLPPQYKDISNTSLPIELLPEYSTIEYTLPRPPQLTPVFLFVVDVCQDEENLQALKDSLIISLSLLPPECLVGLVTFGTMVDVYELGYTECSKSYVFRGSKDYTSKQIQEMLGLPTSNVSPVALQQARSFQGSAAPSRFLLPIQQCEFQLTNILEQLQPDSWPVANDRRPQRCTGTALNISVSMMESVCPNSGGHIMLFAGGPSTVGPGTVVSTELREPIRSHHDIERDQAKHVKKALRFYEGLTKRVSANGHAVDILAGCLDQIGIMEMKSLASSTGGYLVLSDSFTTSIFKQSFQRIFGRDSLNNMLLGFNATMEVLTTKELKISGLIGHAVSLNKKSQNVGDIEIGLGNTNSWKMCGISPKSTYAIYFEVATQSASAPQGDSRGLVQYLTLYQHSSNTFRLRVTTVARAFADGGSPLIVNSFDQEAAAVAMARIAAFKAEVDDGPDVLRWTDRMLIKLCQKFAEYRKDDPSSFRLSSQFTLYPQFMYYLRRSPFLQVFNNSPDETAFYRHMLNHEDVNNSLIMIQPTLQSFSFEHPGGVPVLLDAVSVKPDVILLLDTFFHILIFHGDTIAQWRNAGYQNQPEYQNLKELLEAPRVEAAELLIDRFPIPRFIVCDQGGSQARFLLSRLNPSETHNTTSMYGAPPAHAILTDDVSLQTFMSHLKKLAVAVS</sequence>
<keyword id="KW-0963">Cytoplasm</keyword>
<keyword id="KW-0968">Cytoplasmic vesicle</keyword>
<keyword id="KW-0256">Endoplasmic reticulum</keyword>
<keyword id="KW-0931">ER-Golgi transport</keyword>
<keyword id="KW-0333">Golgi apparatus</keyword>
<keyword id="KW-0472">Membrane</keyword>
<keyword id="KW-0479">Metal-binding</keyword>
<keyword id="KW-0653">Protein transport</keyword>
<keyword id="KW-1185">Reference proteome</keyword>
<keyword id="KW-0813">Transport</keyword>
<keyword id="KW-0862">Zinc</keyword>
<proteinExistence type="inferred from homology"/>
<comment type="function">
    <text evidence="1">Component of the coat protein complex II (COPII) which promotes the formation of transport vesicles from the endoplasmic reticulum (ER). The coat has two main functions, the physical deformation of the endoplasmic reticulum membrane into vesicles and the selection of cargo molecules (By similarity).</text>
</comment>
<comment type="subunit">
    <text evidence="1">The COPII coat is composed of at least 5 proteins: the sec23/24 complex, the sec13/31 complex, and the protein sar1.</text>
</comment>
<comment type="subcellular location">
    <subcellularLocation>
        <location evidence="1">Cytoplasm</location>
    </subcellularLocation>
    <subcellularLocation>
        <location evidence="1">Cytoplasmic vesicle</location>
        <location evidence="1">COPII-coated vesicle membrane</location>
        <topology evidence="1">Peripheral membrane protein</topology>
        <orientation evidence="1">Cytoplasmic side</orientation>
    </subcellularLocation>
    <subcellularLocation>
        <location evidence="1">Endoplasmic reticulum membrane</location>
        <topology evidence="1">Peripheral membrane protein</topology>
        <orientation evidence="1">Cytoplasmic side</orientation>
    </subcellularLocation>
    <subcellularLocation>
        <location evidence="1">Golgi apparatus membrane</location>
        <topology evidence="1">Peripheral membrane protein</topology>
        <orientation evidence="1">Cytoplasmic side</orientation>
    </subcellularLocation>
</comment>
<comment type="similarity">
    <text evidence="2">Belongs to the SEC23/SEC24 family. SEC23 subfamily.</text>
</comment>
<feature type="chain" id="PRO_0000295471" description="Protein transport protein sec23-1">
    <location>
        <begin position="1"/>
        <end position="759"/>
    </location>
</feature>
<feature type="binding site" evidence="1">
    <location>
        <position position="56"/>
    </location>
    <ligand>
        <name>Zn(2+)</name>
        <dbReference type="ChEBI" id="CHEBI:29105"/>
    </ligand>
</feature>
<feature type="binding site" evidence="1">
    <location>
        <position position="60"/>
    </location>
    <ligand>
        <name>Zn(2+)</name>
        <dbReference type="ChEBI" id="CHEBI:29105"/>
    </ligand>
</feature>
<feature type="binding site" evidence="1">
    <location>
        <position position="79"/>
    </location>
    <ligand>
        <name>Zn(2+)</name>
        <dbReference type="ChEBI" id="CHEBI:29105"/>
    </ligand>
</feature>
<feature type="binding site" evidence="1">
    <location>
        <position position="82"/>
    </location>
    <ligand>
        <name>Zn(2+)</name>
        <dbReference type="ChEBI" id="CHEBI:29105"/>
    </ligand>
</feature>
<accession>O74873</accession>